<gene>
    <name evidence="1" type="primary">glmM</name>
    <name type="ordered locus">PTH_0538</name>
</gene>
<comment type="function">
    <text evidence="1">Catalyzes the conversion of glucosamine-6-phosphate to glucosamine-1-phosphate.</text>
</comment>
<comment type="catalytic activity">
    <reaction evidence="1">
        <text>alpha-D-glucosamine 1-phosphate = D-glucosamine 6-phosphate</text>
        <dbReference type="Rhea" id="RHEA:23424"/>
        <dbReference type="ChEBI" id="CHEBI:58516"/>
        <dbReference type="ChEBI" id="CHEBI:58725"/>
        <dbReference type="EC" id="5.4.2.10"/>
    </reaction>
</comment>
<comment type="cofactor">
    <cofactor evidence="1">
        <name>Mg(2+)</name>
        <dbReference type="ChEBI" id="CHEBI:18420"/>
    </cofactor>
    <text evidence="1">Binds 1 Mg(2+) ion per subunit.</text>
</comment>
<comment type="PTM">
    <text evidence="1">Activated by phosphorylation.</text>
</comment>
<comment type="similarity">
    <text evidence="1">Belongs to the phosphohexose mutase family.</text>
</comment>
<accession>A5D4W7</accession>
<protein>
    <recommendedName>
        <fullName evidence="1">Phosphoglucosamine mutase</fullName>
        <ecNumber evidence="1">5.4.2.10</ecNumber>
    </recommendedName>
</protein>
<sequence>MGVMFGTDGVRGVANRDLSPLLAFKIGRAGAHVLARQSPNAAMVIGRDTRISGDMLEAALVAGICSAGVDVLKVGVMPTPAVAYLTRKLEAAAGVVISASHNPVDDNGIKFFGATGYKLSDEVEAEIEALVMDECAGVPWPTGGRVGRVRQVGDAADLYVKFACSTAGVDLSGLKIVVDCANGAAYQVAPRVYSRLGAEVVPIFNRPDGININDGCGSTHPEALMEAVVSEKADLGLAHDGDADRVLAVDADGRLVDGDQIMVICARSLHEKGLLANETVVVTVMSNLGLHLALRESGIRVVQTKVGDRYVLEELLRNGARFGGEQSGHIIFLDHNTTGDGILTALQLLSVIKETGKPLKELAGQMERLPQLLENVRVADKALVMNSPVLAEAIEREERLLEGMGRILVRPSGTEPLVRVMAEGKNMGQLKEIVGRLVNIIKEID</sequence>
<name>GLMM_PELTS</name>
<evidence type="ECO:0000255" key="1">
    <source>
        <dbReference type="HAMAP-Rule" id="MF_01554"/>
    </source>
</evidence>
<feature type="chain" id="PRO_1000087772" description="Phosphoglucosamine mutase">
    <location>
        <begin position="1"/>
        <end position="445"/>
    </location>
</feature>
<feature type="active site" description="Phosphoserine intermediate" evidence="1">
    <location>
        <position position="100"/>
    </location>
</feature>
<feature type="binding site" description="via phosphate group" evidence="1">
    <location>
        <position position="100"/>
    </location>
    <ligand>
        <name>Mg(2+)</name>
        <dbReference type="ChEBI" id="CHEBI:18420"/>
    </ligand>
</feature>
<feature type="binding site" evidence="1">
    <location>
        <position position="240"/>
    </location>
    <ligand>
        <name>Mg(2+)</name>
        <dbReference type="ChEBI" id="CHEBI:18420"/>
    </ligand>
</feature>
<feature type="binding site" evidence="1">
    <location>
        <position position="242"/>
    </location>
    <ligand>
        <name>Mg(2+)</name>
        <dbReference type="ChEBI" id="CHEBI:18420"/>
    </ligand>
</feature>
<feature type="binding site" evidence="1">
    <location>
        <position position="244"/>
    </location>
    <ligand>
        <name>Mg(2+)</name>
        <dbReference type="ChEBI" id="CHEBI:18420"/>
    </ligand>
</feature>
<feature type="modified residue" description="Phosphoserine" evidence="1">
    <location>
        <position position="100"/>
    </location>
</feature>
<dbReference type="EC" id="5.4.2.10" evidence="1"/>
<dbReference type="EMBL" id="AP009389">
    <property type="protein sequence ID" value="BAF58719.1"/>
    <property type="molecule type" value="Genomic_DNA"/>
</dbReference>
<dbReference type="SMR" id="A5D4W7"/>
<dbReference type="STRING" id="370438.PTH_0538"/>
<dbReference type="KEGG" id="pth:PTH_0538"/>
<dbReference type="eggNOG" id="COG1109">
    <property type="taxonomic scope" value="Bacteria"/>
</dbReference>
<dbReference type="HOGENOM" id="CLU_016950_7_0_9"/>
<dbReference type="Proteomes" id="UP000006556">
    <property type="component" value="Chromosome"/>
</dbReference>
<dbReference type="GO" id="GO:0005829">
    <property type="term" value="C:cytosol"/>
    <property type="evidence" value="ECO:0007669"/>
    <property type="project" value="TreeGrafter"/>
</dbReference>
<dbReference type="GO" id="GO:0000287">
    <property type="term" value="F:magnesium ion binding"/>
    <property type="evidence" value="ECO:0007669"/>
    <property type="project" value="UniProtKB-UniRule"/>
</dbReference>
<dbReference type="GO" id="GO:0008966">
    <property type="term" value="F:phosphoglucosamine mutase activity"/>
    <property type="evidence" value="ECO:0007669"/>
    <property type="project" value="UniProtKB-UniRule"/>
</dbReference>
<dbReference type="GO" id="GO:0004615">
    <property type="term" value="F:phosphomannomutase activity"/>
    <property type="evidence" value="ECO:0007669"/>
    <property type="project" value="TreeGrafter"/>
</dbReference>
<dbReference type="GO" id="GO:0005975">
    <property type="term" value="P:carbohydrate metabolic process"/>
    <property type="evidence" value="ECO:0007669"/>
    <property type="project" value="InterPro"/>
</dbReference>
<dbReference type="GO" id="GO:0009252">
    <property type="term" value="P:peptidoglycan biosynthetic process"/>
    <property type="evidence" value="ECO:0007669"/>
    <property type="project" value="TreeGrafter"/>
</dbReference>
<dbReference type="GO" id="GO:0006048">
    <property type="term" value="P:UDP-N-acetylglucosamine biosynthetic process"/>
    <property type="evidence" value="ECO:0007669"/>
    <property type="project" value="TreeGrafter"/>
</dbReference>
<dbReference type="CDD" id="cd05802">
    <property type="entry name" value="GlmM"/>
    <property type="match status" value="1"/>
</dbReference>
<dbReference type="FunFam" id="3.30.310.50:FF:000001">
    <property type="entry name" value="Phosphoglucosamine mutase"/>
    <property type="match status" value="1"/>
</dbReference>
<dbReference type="FunFam" id="3.40.120.10:FF:000001">
    <property type="entry name" value="Phosphoglucosamine mutase"/>
    <property type="match status" value="1"/>
</dbReference>
<dbReference type="FunFam" id="3.40.120.10:FF:000002">
    <property type="entry name" value="Phosphoglucosamine mutase"/>
    <property type="match status" value="1"/>
</dbReference>
<dbReference type="Gene3D" id="3.40.120.10">
    <property type="entry name" value="Alpha-D-Glucose-1,6-Bisphosphate, subunit A, domain 3"/>
    <property type="match status" value="3"/>
</dbReference>
<dbReference type="Gene3D" id="3.30.310.50">
    <property type="entry name" value="Alpha-D-phosphohexomutase, C-terminal domain"/>
    <property type="match status" value="1"/>
</dbReference>
<dbReference type="HAMAP" id="MF_01554_B">
    <property type="entry name" value="GlmM_B"/>
    <property type="match status" value="1"/>
</dbReference>
<dbReference type="InterPro" id="IPR005844">
    <property type="entry name" value="A-D-PHexomutase_a/b/a-I"/>
</dbReference>
<dbReference type="InterPro" id="IPR016055">
    <property type="entry name" value="A-D-PHexomutase_a/b/a-I/II/III"/>
</dbReference>
<dbReference type="InterPro" id="IPR005845">
    <property type="entry name" value="A-D-PHexomutase_a/b/a-II"/>
</dbReference>
<dbReference type="InterPro" id="IPR005846">
    <property type="entry name" value="A-D-PHexomutase_a/b/a-III"/>
</dbReference>
<dbReference type="InterPro" id="IPR005843">
    <property type="entry name" value="A-D-PHexomutase_C"/>
</dbReference>
<dbReference type="InterPro" id="IPR036900">
    <property type="entry name" value="A-D-PHexomutase_C_sf"/>
</dbReference>
<dbReference type="InterPro" id="IPR016066">
    <property type="entry name" value="A-D-PHexomutase_CS"/>
</dbReference>
<dbReference type="InterPro" id="IPR005841">
    <property type="entry name" value="Alpha-D-phosphohexomutase_SF"/>
</dbReference>
<dbReference type="InterPro" id="IPR006352">
    <property type="entry name" value="GlmM_bact"/>
</dbReference>
<dbReference type="InterPro" id="IPR050060">
    <property type="entry name" value="Phosphoglucosamine_mutase"/>
</dbReference>
<dbReference type="NCBIfam" id="TIGR01455">
    <property type="entry name" value="glmM"/>
    <property type="match status" value="1"/>
</dbReference>
<dbReference type="NCBIfam" id="NF008139">
    <property type="entry name" value="PRK10887.1"/>
    <property type="match status" value="1"/>
</dbReference>
<dbReference type="PANTHER" id="PTHR42946:SF1">
    <property type="entry name" value="PHOSPHOGLUCOMUTASE (ALPHA-D-GLUCOSE-1,6-BISPHOSPHATE-DEPENDENT)"/>
    <property type="match status" value="1"/>
</dbReference>
<dbReference type="PANTHER" id="PTHR42946">
    <property type="entry name" value="PHOSPHOHEXOSE MUTASE"/>
    <property type="match status" value="1"/>
</dbReference>
<dbReference type="Pfam" id="PF02878">
    <property type="entry name" value="PGM_PMM_I"/>
    <property type="match status" value="1"/>
</dbReference>
<dbReference type="Pfam" id="PF02879">
    <property type="entry name" value="PGM_PMM_II"/>
    <property type="match status" value="1"/>
</dbReference>
<dbReference type="Pfam" id="PF02880">
    <property type="entry name" value="PGM_PMM_III"/>
    <property type="match status" value="1"/>
</dbReference>
<dbReference type="Pfam" id="PF00408">
    <property type="entry name" value="PGM_PMM_IV"/>
    <property type="match status" value="1"/>
</dbReference>
<dbReference type="PRINTS" id="PR00509">
    <property type="entry name" value="PGMPMM"/>
</dbReference>
<dbReference type="SUPFAM" id="SSF55957">
    <property type="entry name" value="Phosphoglucomutase, C-terminal domain"/>
    <property type="match status" value="1"/>
</dbReference>
<dbReference type="SUPFAM" id="SSF53738">
    <property type="entry name" value="Phosphoglucomutase, first 3 domains"/>
    <property type="match status" value="3"/>
</dbReference>
<dbReference type="PROSITE" id="PS00710">
    <property type="entry name" value="PGM_PMM"/>
    <property type="match status" value="1"/>
</dbReference>
<reference key="1">
    <citation type="journal article" date="2008" name="Genome Res.">
        <title>The genome of Pelotomaculum thermopropionicum reveals niche-associated evolution in anaerobic microbiota.</title>
        <authorList>
            <person name="Kosaka T."/>
            <person name="Kato S."/>
            <person name="Shimoyama T."/>
            <person name="Ishii S."/>
            <person name="Abe T."/>
            <person name="Watanabe K."/>
        </authorList>
    </citation>
    <scope>NUCLEOTIDE SEQUENCE [LARGE SCALE GENOMIC DNA]</scope>
    <source>
        <strain>DSM 13744 / JCM 10971 / SI</strain>
    </source>
</reference>
<organism>
    <name type="scientific">Pelotomaculum thermopropionicum (strain DSM 13744 / JCM 10971 / SI)</name>
    <dbReference type="NCBI Taxonomy" id="370438"/>
    <lineage>
        <taxon>Bacteria</taxon>
        <taxon>Bacillati</taxon>
        <taxon>Bacillota</taxon>
        <taxon>Clostridia</taxon>
        <taxon>Eubacteriales</taxon>
        <taxon>Desulfotomaculaceae</taxon>
        <taxon>Pelotomaculum</taxon>
    </lineage>
</organism>
<keyword id="KW-0413">Isomerase</keyword>
<keyword id="KW-0460">Magnesium</keyword>
<keyword id="KW-0479">Metal-binding</keyword>
<keyword id="KW-0597">Phosphoprotein</keyword>
<keyword id="KW-1185">Reference proteome</keyword>
<proteinExistence type="inferred from homology"/>